<name>YE42_SCHPO</name>
<organism>
    <name type="scientific">Schizosaccharomyces pombe (strain 972 / ATCC 24843)</name>
    <name type="common">Fission yeast</name>
    <dbReference type="NCBI Taxonomy" id="284812"/>
    <lineage>
        <taxon>Eukaryota</taxon>
        <taxon>Fungi</taxon>
        <taxon>Dikarya</taxon>
        <taxon>Ascomycota</taxon>
        <taxon>Taphrinomycotina</taxon>
        <taxon>Schizosaccharomycetes</taxon>
        <taxon>Schizosaccharomycetales</taxon>
        <taxon>Schizosaccharomycetaceae</taxon>
        <taxon>Schizosaccharomyces</taxon>
    </lineage>
</organism>
<proteinExistence type="inferred from homology"/>
<gene>
    <name type="ORF">SPAC24C9.02c</name>
</gene>
<protein>
    <recommendedName>
        <fullName evidence="1">Putative holocytochrome-c1 synthase</fullName>
        <ecNumber evidence="1">4.4.1.17</ecNumber>
    </recommendedName>
    <alternativeName>
        <fullName evidence="1">Cytochrome c1 heme lyase</fullName>
        <shortName evidence="1">CC1HL</shortName>
    </alternativeName>
</protein>
<keyword id="KW-0349">Heme</keyword>
<keyword id="KW-0408">Iron</keyword>
<keyword id="KW-0456">Lyase</keyword>
<keyword id="KW-0472">Membrane</keyword>
<keyword id="KW-0479">Metal-binding</keyword>
<keyword id="KW-0496">Mitochondrion</keyword>
<keyword id="KW-0999">Mitochondrion inner membrane</keyword>
<keyword id="KW-1185">Reference proteome</keyword>
<feature type="chain" id="PRO_0000121720" description="Putative holocytochrome-c1 synthase">
    <location>
        <begin position="1"/>
        <end position="216"/>
    </location>
</feature>
<feature type="region of interest" description="Disordered" evidence="2">
    <location>
        <begin position="1"/>
        <end position="46"/>
    </location>
</feature>
<evidence type="ECO:0000250" key="1">
    <source>
        <dbReference type="UniProtKB" id="Q00873"/>
    </source>
</evidence>
<evidence type="ECO:0000256" key="2">
    <source>
        <dbReference type="SAM" id="MobiDB-lite"/>
    </source>
</evidence>
<evidence type="ECO:0000305" key="3"/>
<dbReference type="EC" id="4.4.1.17" evidence="1"/>
<dbReference type="EMBL" id="CU329670">
    <property type="protein sequence ID" value="CAB11259.1"/>
    <property type="molecule type" value="Genomic_DNA"/>
</dbReference>
<dbReference type="PIR" id="T38343">
    <property type="entry name" value="T38343"/>
</dbReference>
<dbReference type="FunCoup" id="O13962">
    <property type="interactions" value="339"/>
</dbReference>
<dbReference type="STRING" id="284812.O13962"/>
<dbReference type="PaxDb" id="4896-SPAC24C9.02c.1"/>
<dbReference type="EnsemblFungi" id="SPAC24C9.02c.1">
    <property type="protein sequence ID" value="SPAC24C9.02c.1:pep"/>
    <property type="gene ID" value="SPAC24C9.02c"/>
</dbReference>
<dbReference type="KEGG" id="spo:2541462"/>
<dbReference type="PomBase" id="SPAC24C9.02c"/>
<dbReference type="VEuPathDB" id="FungiDB:SPAC24C9.02c"/>
<dbReference type="eggNOG" id="KOG3996">
    <property type="taxonomic scope" value="Eukaryota"/>
</dbReference>
<dbReference type="HOGENOM" id="CLU_048602_1_2_1"/>
<dbReference type="InParanoid" id="O13962"/>
<dbReference type="OMA" id="SCPVDHK"/>
<dbReference type="PhylomeDB" id="O13962"/>
<dbReference type="Reactome" id="R-SPO-611105">
    <property type="pathway name" value="Respiratory electron transport"/>
</dbReference>
<dbReference type="PRO" id="PR:O13962"/>
<dbReference type="Proteomes" id="UP000002485">
    <property type="component" value="Chromosome I"/>
</dbReference>
<dbReference type="GO" id="GO:0005743">
    <property type="term" value="C:mitochondrial inner membrane"/>
    <property type="evidence" value="ECO:0007669"/>
    <property type="project" value="UniProtKB-SubCell"/>
</dbReference>
<dbReference type="GO" id="GO:0005758">
    <property type="term" value="C:mitochondrial intermembrane space"/>
    <property type="evidence" value="ECO:0000266"/>
    <property type="project" value="PomBase"/>
</dbReference>
<dbReference type="GO" id="GO:0005739">
    <property type="term" value="C:mitochondrion"/>
    <property type="evidence" value="ECO:0000318"/>
    <property type="project" value="GO_Central"/>
</dbReference>
<dbReference type="GO" id="GO:0004408">
    <property type="term" value="F:holocytochrome-c synthase activity"/>
    <property type="evidence" value="ECO:0000318"/>
    <property type="project" value="GO_Central"/>
</dbReference>
<dbReference type="GO" id="GO:0046872">
    <property type="term" value="F:metal ion binding"/>
    <property type="evidence" value="ECO:0007669"/>
    <property type="project" value="UniProtKB-KW"/>
</dbReference>
<dbReference type="GO" id="GO:1903607">
    <property type="term" value="P:cytochrome c biosynthetic process"/>
    <property type="evidence" value="ECO:0000305"/>
    <property type="project" value="PomBase"/>
</dbReference>
<dbReference type="InterPro" id="IPR000511">
    <property type="entry name" value="Holocyt_c/c1_synthase"/>
</dbReference>
<dbReference type="PANTHER" id="PTHR12743">
    <property type="entry name" value="CYTOCHROME C1 HEME LYASE"/>
    <property type="match status" value="1"/>
</dbReference>
<dbReference type="PANTHER" id="PTHR12743:SF0">
    <property type="entry name" value="HOLOCYTOCHROME C-TYPE SYNTHASE"/>
    <property type="match status" value="1"/>
</dbReference>
<dbReference type="Pfam" id="PF01265">
    <property type="entry name" value="Cyto_heme_lyase"/>
    <property type="match status" value="1"/>
</dbReference>
<dbReference type="PROSITE" id="PS00821">
    <property type="entry name" value="CYTO_HEME_LYASE_1"/>
    <property type="match status" value="1"/>
</dbReference>
<dbReference type="PROSITE" id="PS00822">
    <property type="entry name" value="CYTO_HEME_LYASE_2"/>
    <property type="match status" value="1"/>
</dbReference>
<comment type="function">
    <text evidence="1">Lyase that catalyzes the covalent linking of the heme group to the cytochrome C1 apoprotein to produce the mature functional cytochrome.</text>
</comment>
<comment type="catalytic activity">
    <reaction evidence="1">
        <text>holo-[cytochrome c] = apo-[cytochrome c] + heme b</text>
        <dbReference type="Rhea" id="RHEA:22648"/>
        <dbReference type="Rhea" id="RHEA-COMP:10725"/>
        <dbReference type="Rhea" id="RHEA-COMP:10726"/>
        <dbReference type="ChEBI" id="CHEBI:29950"/>
        <dbReference type="ChEBI" id="CHEBI:60344"/>
        <dbReference type="ChEBI" id="CHEBI:83739"/>
        <dbReference type="EC" id="4.4.1.17"/>
    </reaction>
    <physiologicalReaction direction="right-to-left" evidence="1">
        <dbReference type="Rhea" id="RHEA:22650"/>
    </physiologicalReaction>
</comment>
<comment type="subcellular location">
    <subcellularLocation>
        <location evidence="1">Mitochondrion inner membrane</location>
    </subcellularLocation>
</comment>
<comment type="similarity">
    <text evidence="3">Belongs to the cytochrome c-type heme lyase family.</text>
</comment>
<sequence length="216" mass="25161">MQPEQLNQEEESKCPVPPEVRDAWLKSHGGKKPSEVHDTPHPTMLPTEREISTIPKVVTESDSGKEEKWIYPSQQMFFDAMKRKNWNPHPEDMKTIVPIHNAVNERAWQDILQWEQGWGSEKCGGPKLERFDGNVKKLTPKARILNLLGYNKPFDRHDWLVNRCGRKVAYVIDFYNGPTVNGTPSIYLDVRPKLSVHGAWMRVYRWTNEHFSQNSK</sequence>
<accession>O13962</accession>
<reference key="1">
    <citation type="journal article" date="2002" name="Nature">
        <title>The genome sequence of Schizosaccharomyces pombe.</title>
        <authorList>
            <person name="Wood V."/>
            <person name="Gwilliam R."/>
            <person name="Rajandream M.A."/>
            <person name="Lyne M.H."/>
            <person name="Lyne R."/>
            <person name="Stewart A."/>
            <person name="Sgouros J.G."/>
            <person name="Peat N."/>
            <person name="Hayles J."/>
            <person name="Baker S.G."/>
            <person name="Basham D."/>
            <person name="Bowman S."/>
            <person name="Brooks K."/>
            <person name="Brown D."/>
            <person name="Brown S."/>
            <person name="Chillingworth T."/>
            <person name="Churcher C.M."/>
            <person name="Collins M."/>
            <person name="Connor R."/>
            <person name="Cronin A."/>
            <person name="Davis P."/>
            <person name="Feltwell T."/>
            <person name="Fraser A."/>
            <person name="Gentles S."/>
            <person name="Goble A."/>
            <person name="Hamlin N."/>
            <person name="Harris D.E."/>
            <person name="Hidalgo J."/>
            <person name="Hodgson G."/>
            <person name="Holroyd S."/>
            <person name="Hornsby T."/>
            <person name="Howarth S."/>
            <person name="Huckle E.J."/>
            <person name="Hunt S."/>
            <person name="Jagels K."/>
            <person name="James K.D."/>
            <person name="Jones L."/>
            <person name="Jones M."/>
            <person name="Leather S."/>
            <person name="McDonald S."/>
            <person name="McLean J."/>
            <person name="Mooney P."/>
            <person name="Moule S."/>
            <person name="Mungall K.L."/>
            <person name="Murphy L.D."/>
            <person name="Niblett D."/>
            <person name="Odell C."/>
            <person name="Oliver K."/>
            <person name="O'Neil S."/>
            <person name="Pearson D."/>
            <person name="Quail M.A."/>
            <person name="Rabbinowitsch E."/>
            <person name="Rutherford K.M."/>
            <person name="Rutter S."/>
            <person name="Saunders D."/>
            <person name="Seeger K."/>
            <person name="Sharp S."/>
            <person name="Skelton J."/>
            <person name="Simmonds M.N."/>
            <person name="Squares R."/>
            <person name="Squares S."/>
            <person name="Stevens K."/>
            <person name="Taylor K."/>
            <person name="Taylor R.G."/>
            <person name="Tivey A."/>
            <person name="Walsh S.V."/>
            <person name="Warren T."/>
            <person name="Whitehead S."/>
            <person name="Woodward J.R."/>
            <person name="Volckaert G."/>
            <person name="Aert R."/>
            <person name="Robben J."/>
            <person name="Grymonprez B."/>
            <person name="Weltjens I."/>
            <person name="Vanstreels E."/>
            <person name="Rieger M."/>
            <person name="Schaefer M."/>
            <person name="Mueller-Auer S."/>
            <person name="Gabel C."/>
            <person name="Fuchs M."/>
            <person name="Duesterhoeft A."/>
            <person name="Fritzc C."/>
            <person name="Holzer E."/>
            <person name="Moestl D."/>
            <person name="Hilbert H."/>
            <person name="Borzym K."/>
            <person name="Langer I."/>
            <person name="Beck A."/>
            <person name="Lehrach H."/>
            <person name="Reinhardt R."/>
            <person name="Pohl T.M."/>
            <person name="Eger P."/>
            <person name="Zimmermann W."/>
            <person name="Wedler H."/>
            <person name="Wambutt R."/>
            <person name="Purnelle B."/>
            <person name="Goffeau A."/>
            <person name="Cadieu E."/>
            <person name="Dreano S."/>
            <person name="Gloux S."/>
            <person name="Lelaure V."/>
            <person name="Mottier S."/>
            <person name="Galibert F."/>
            <person name="Aves S.J."/>
            <person name="Xiang Z."/>
            <person name="Hunt C."/>
            <person name="Moore K."/>
            <person name="Hurst S.M."/>
            <person name="Lucas M."/>
            <person name="Rochet M."/>
            <person name="Gaillardin C."/>
            <person name="Tallada V.A."/>
            <person name="Garzon A."/>
            <person name="Thode G."/>
            <person name="Daga R.R."/>
            <person name="Cruzado L."/>
            <person name="Jimenez J."/>
            <person name="Sanchez M."/>
            <person name="del Rey F."/>
            <person name="Benito J."/>
            <person name="Dominguez A."/>
            <person name="Revuelta J.L."/>
            <person name="Moreno S."/>
            <person name="Armstrong J."/>
            <person name="Forsburg S.L."/>
            <person name="Cerutti L."/>
            <person name="Lowe T."/>
            <person name="McCombie W.R."/>
            <person name="Paulsen I."/>
            <person name="Potashkin J."/>
            <person name="Shpakovski G.V."/>
            <person name="Ussery D."/>
            <person name="Barrell B.G."/>
            <person name="Nurse P."/>
        </authorList>
    </citation>
    <scope>NUCLEOTIDE SEQUENCE [LARGE SCALE GENOMIC DNA]</scope>
    <source>
        <strain>972 / ATCC 24843</strain>
    </source>
</reference>